<sequence>MDDSKVVGGKVKKPGKRGRKPAKIDLKAKLERSRQSARECRARKKLRYQYLEELVSSRERAICALREELEMYKQWCMAMDQGKIPSEIKALLTGEEQSKSQQNSSRHMKAGKTDANSNSW</sequence>
<feature type="chain" id="PRO_0000318191" description="cAMP-responsive element-binding protein-like 2">
    <location>
        <begin position="1"/>
        <end position="120"/>
    </location>
</feature>
<feature type="domain" description="bZIP">
    <location>
        <begin position="23"/>
        <end position="86"/>
    </location>
</feature>
<feature type="region of interest" description="Disordered" evidence="2">
    <location>
        <begin position="1"/>
        <end position="24"/>
    </location>
</feature>
<feature type="region of interest" description="Basic motif" evidence="1">
    <location>
        <begin position="29"/>
        <end position="60"/>
    </location>
</feature>
<feature type="region of interest" description="Leucine-zipper" evidence="1">
    <location>
        <begin position="62"/>
        <end position="69"/>
    </location>
</feature>
<feature type="region of interest" description="Disordered" evidence="2">
    <location>
        <begin position="93"/>
        <end position="120"/>
    </location>
</feature>
<feature type="compositionally biased region" description="Basic residues" evidence="2">
    <location>
        <begin position="10"/>
        <end position="21"/>
    </location>
</feature>
<gene>
    <name type="primary">CREBL2</name>
</gene>
<comment type="function">
    <text>Probable regulator of CREB1 transcriptional activity which is involved in adipose cells differentiation. May also play a regulatory role in the cell cycle.</text>
</comment>
<comment type="subunit">
    <text evidence="1 3">Interacts with CREB1; regulates CREB1 phosphorylation, stability and transcriptional activity (By similarity). Interacts with immediate-early (IE) protein BICP22 of bovine herpesvirus-1 (BHV-1).</text>
</comment>
<comment type="subcellular location">
    <subcellularLocation>
        <location evidence="3">Nucleus</location>
    </subcellularLocation>
</comment>
<comment type="PTM">
    <text evidence="1">Phosphorylated by AMPK.</text>
</comment>
<comment type="similarity">
    <text evidence="4">Belongs to the bZIP family. ATF subfamily.</text>
</comment>
<evidence type="ECO:0000250" key="1"/>
<evidence type="ECO:0000256" key="2">
    <source>
        <dbReference type="SAM" id="MobiDB-lite"/>
    </source>
</evidence>
<evidence type="ECO:0000269" key="3">
    <source>
    </source>
</evidence>
<evidence type="ECO:0000305" key="4"/>
<protein>
    <recommendedName>
        <fullName>cAMP-responsive element-binding protein-like 2</fullName>
    </recommendedName>
</protein>
<organism>
    <name type="scientific">Bos taurus</name>
    <name type="common">Bovine</name>
    <dbReference type="NCBI Taxonomy" id="9913"/>
    <lineage>
        <taxon>Eukaryota</taxon>
        <taxon>Metazoa</taxon>
        <taxon>Chordata</taxon>
        <taxon>Craniata</taxon>
        <taxon>Vertebrata</taxon>
        <taxon>Euteleostomi</taxon>
        <taxon>Mammalia</taxon>
        <taxon>Eutheria</taxon>
        <taxon>Laurasiatheria</taxon>
        <taxon>Artiodactyla</taxon>
        <taxon>Ruminantia</taxon>
        <taxon>Pecora</taxon>
        <taxon>Bovidae</taxon>
        <taxon>Bovinae</taxon>
        <taxon>Bos</taxon>
    </lineage>
</organism>
<dbReference type="EMBL" id="BC119861">
    <property type="protein sequence ID" value="AAI19862.1"/>
    <property type="molecule type" value="mRNA"/>
</dbReference>
<dbReference type="RefSeq" id="NP_001069556.1">
    <property type="nucleotide sequence ID" value="NM_001076088.1"/>
</dbReference>
<dbReference type="SMR" id="Q0VD32"/>
<dbReference type="FunCoup" id="Q0VD32">
    <property type="interactions" value="1134"/>
</dbReference>
<dbReference type="IntAct" id="Q0VD32">
    <property type="interactions" value="1"/>
</dbReference>
<dbReference type="STRING" id="9913.ENSBTAP00000040624"/>
<dbReference type="PaxDb" id="9913-ENSBTAP00000040624"/>
<dbReference type="Ensembl" id="ENSBTAT00000043028.2">
    <property type="protein sequence ID" value="ENSBTAP00000040624.1"/>
    <property type="gene ID" value="ENSBTAG00000011957.6"/>
</dbReference>
<dbReference type="GeneID" id="537195"/>
<dbReference type="KEGG" id="bta:537195"/>
<dbReference type="CTD" id="1389"/>
<dbReference type="VEuPathDB" id="HostDB:ENSBTAG00000011957"/>
<dbReference type="VGNC" id="VGNC:27699">
    <property type="gene designation" value="CREBL2"/>
</dbReference>
<dbReference type="eggNOG" id="KOG4515">
    <property type="taxonomic scope" value="Eukaryota"/>
</dbReference>
<dbReference type="GeneTree" id="ENSGT00390000005388"/>
<dbReference type="HOGENOM" id="CLU_134161_0_0_1"/>
<dbReference type="InParanoid" id="Q0VD32"/>
<dbReference type="OMA" id="DKYYKWN"/>
<dbReference type="OrthoDB" id="5984119at2759"/>
<dbReference type="TreeFam" id="TF323305"/>
<dbReference type="Proteomes" id="UP000009136">
    <property type="component" value="Chromosome 5"/>
</dbReference>
<dbReference type="Bgee" id="ENSBTAG00000011957">
    <property type="expression patterns" value="Expressed in adenohypophysis and 104 other cell types or tissues"/>
</dbReference>
<dbReference type="GO" id="GO:0016604">
    <property type="term" value="C:nuclear body"/>
    <property type="evidence" value="ECO:0000314"/>
    <property type="project" value="AgBase"/>
</dbReference>
<dbReference type="GO" id="GO:0005634">
    <property type="term" value="C:nucleus"/>
    <property type="evidence" value="ECO:0000250"/>
    <property type="project" value="UniProtKB"/>
</dbReference>
<dbReference type="GO" id="GO:0003677">
    <property type="term" value="F:DNA binding"/>
    <property type="evidence" value="ECO:0007669"/>
    <property type="project" value="UniProtKB-KW"/>
</dbReference>
<dbReference type="GO" id="GO:0003700">
    <property type="term" value="F:DNA-binding transcription factor activity"/>
    <property type="evidence" value="ECO:0007669"/>
    <property type="project" value="InterPro"/>
</dbReference>
<dbReference type="GO" id="GO:0030154">
    <property type="term" value="P:cell differentiation"/>
    <property type="evidence" value="ECO:0007669"/>
    <property type="project" value="UniProtKB-KW"/>
</dbReference>
<dbReference type="GO" id="GO:0046326">
    <property type="term" value="P:positive regulation of D-glucose import"/>
    <property type="evidence" value="ECO:0000250"/>
    <property type="project" value="UniProtKB"/>
</dbReference>
<dbReference type="GO" id="GO:0045893">
    <property type="term" value="P:positive regulation of DNA-templated transcription"/>
    <property type="evidence" value="ECO:0000250"/>
    <property type="project" value="UniProtKB"/>
</dbReference>
<dbReference type="GO" id="GO:0045600">
    <property type="term" value="P:positive regulation of fat cell differentiation"/>
    <property type="evidence" value="ECO:0000250"/>
    <property type="project" value="UniProtKB"/>
</dbReference>
<dbReference type="GO" id="GO:0046889">
    <property type="term" value="P:positive regulation of lipid biosynthetic process"/>
    <property type="evidence" value="ECO:0000250"/>
    <property type="project" value="UniProtKB"/>
</dbReference>
<dbReference type="GO" id="GO:0033138">
    <property type="term" value="P:positive regulation of peptidyl-serine phosphorylation"/>
    <property type="evidence" value="ECO:0000250"/>
    <property type="project" value="UniProtKB"/>
</dbReference>
<dbReference type="GO" id="GO:0050821">
    <property type="term" value="P:protein stabilization"/>
    <property type="evidence" value="ECO:0000250"/>
    <property type="project" value="UniProtKB"/>
</dbReference>
<dbReference type="GO" id="GO:0006355">
    <property type="term" value="P:regulation of DNA-templated transcription"/>
    <property type="evidence" value="ECO:0000318"/>
    <property type="project" value="GO_Central"/>
</dbReference>
<dbReference type="CDD" id="cd14709">
    <property type="entry name" value="bZIP_CREBL2"/>
    <property type="match status" value="1"/>
</dbReference>
<dbReference type="FunFam" id="1.20.5.170:FF:000044">
    <property type="entry name" value="cAMP-responsive element-binding protein-like 2 isoform X2"/>
    <property type="match status" value="1"/>
</dbReference>
<dbReference type="Gene3D" id="1.20.5.170">
    <property type="match status" value="1"/>
</dbReference>
<dbReference type="InterPro" id="IPR004827">
    <property type="entry name" value="bZIP"/>
</dbReference>
<dbReference type="InterPro" id="IPR046347">
    <property type="entry name" value="bZIP_sf"/>
</dbReference>
<dbReference type="InterPro" id="IPR039250">
    <property type="entry name" value="CREBL2/REPTOR-BP"/>
</dbReference>
<dbReference type="PANTHER" id="PTHR21051">
    <property type="entry name" value="CAMP-RESPONSIVE ELEMENT-BINDING PROTEIN-LIKE 2"/>
    <property type="match status" value="1"/>
</dbReference>
<dbReference type="PANTHER" id="PTHR21051:SF4">
    <property type="entry name" value="CAMP-RESPONSIVE ELEMENT-BINDING PROTEIN-LIKE 2"/>
    <property type="match status" value="1"/>
</dbReference>
<dbReference type="Pfam" id="PF07716">
    <property type="entry name" value="bZIP_2"/>
    <property type="match status" value="1"/>
</dbReference>
<dbReference type="SUPFAM" id="SSF57959">
    <property type="entry name" value="Leucine zipper domain"/>
    <property type="match status" value="1"/>
</dbReference>
<reference key="1">
    <citation type="submission" date="2006-08" db="EMBL/GenBank/DDBJ databases">
        <authorList>
            <consortium name="NIH - Mammalian Gene Collection (MGC) project"/>
        </authorList>
    </citation>
    <scope>NUCLEOTIDE SEQUENCE [LARGE SCALE MRNA]</scope>
    <source>
        <strain>Hereford</strain>
        <tissue>Thalamus</tissue>
    </source>
</reference>
<reference key="2">
    <citation type="journal article" date="2006" name="Vet. Microbiol.">
        <title>Host cell targets of immediate-early protein BICP22 of bovine herpesvirus 1.</title>
        <authorList>
            <person name="Saydam O."/>
            <person name="Steiner F."/>
            <person name="Vogt B."/>
            <person name="Schwyzer M."/>
        </authorList>
    </citation>
    <scope>INTERACTION WITH BICP22</scope>
    <scope>SUBCELLULAR LOCATION</scope>
</reference>
<proteinExistence type="evidence at protein level"/>
<accession>Q0VD32</accession>
<keyword id="KW-0010">Activator</keyword>
<keyword id="KW-0221">Differentiation</keyword>
<keyword id="KW-0238">DNA-binding</keyword>
<keyword id="KW-0945">Host-virus interaction</keyword>
<keyword id="KW-0539">Nucleus</keyword>
<keyword id="KW-0597">Phosphoprotein</keyword>
<keyword id="KW-1185">Reference proteome</keyword>
<keyword id="KW-0804">Transcription</keyword>
<keyword id="KW-0805">Transcription regulation</keyword>
<name>CRBL2_BOVIN</name>